<reference key="1">
    <citation type="journal article" date="2001" name="Plant Mol. Biol.">
        <title>One of two tandem Arabidopsis genes homologous to monosaccharide transporters is senescence-associated.</title>
        <authorList>
            <person name="Quirino B.F."/>
            <person name="Reiter W.-D."/>
            <person name="Amasino R.M."/>
        </authorList>
    </citation>
    <scope>NUCLEOTIDE SEQUENCE [MRNA]</scope>
    <scope>TISSUE SPECIFICITY</scope>
    <scope>DEVELOPMENTAL STAGE</scope>
    <source>
        <strain>cv. Landsberg erecta</strain>
    </source>
</reference>
<reference key="2">
    <citation type="journal article" date="2000" name="Nature">
        <title>Sequence and analysis of chromosome 5 of the plant Arabidopsis thaliana.</title>
        <authorList>
            <person name="Tabata S."/>
            <person name="Kaneko T."/>
            <person name="Nakamura Y."/>
            <person name="Kotani H."/>
            <person name="Kato T."/>
            <person name="Asamizu E."/>
            <person name="Miyajima N."/>
            <person name="Sasamoto S."/>
            <person name="Kimura T."/>
            <person name="Hosouchi T."/>
            <person name="Kawashima K."/>
            <person name="Kohara M."/>
            <person name="Matsumoto M."/>
            <person name="Matsuno A."/>
            <person name="Muraki A."/>
            <person name="Nakayama S."/>
            <person name="Nakazaki N."/>
            <person name="Naruo K."/>
            <person name="Okumura S."/>
            <person name="Shinpo S."/>
            <person name="Takeuchi C."/>
            <person name="Wada T."/>
            <person name="Watanabe A."/>
            <person name="Yamada M."/>
            <person name="Yasuda M."/>
            <person name="Sato S."/>
            <person name="de la Bastide M."/>
            <person name="Huang E."/>
            <person name="Spiegel L."/>
            <person name="Gnoj L."/>
            <person name="O'Shaughnessy A."/>
            <person name="Preston R."/>
            <person name="Habermann K."/>
            <person name="Murray J."/>
            <person name="Johnson D."/>
            <person name="Rohlfing T."/>
            <person name="Nelson J."/>
            <person name="Stoneking T."/>
            <person name="Pepin K."/>
            <person name="Spieth J."/>
            <person name="Sekhon M."/>
            <person name="Armstrong J."/>
            <person name="Becker M."/>
            <person name="Belter E."/>
            <person name="Cordum H."/>
            <person name="Cordes M."/>
            <person name="Courtney L."/>
            <person name="Courtney W."/>
            <person name="Dante M."/>
            <person name="Du H."/>
            <person name="Edwards J."/>
            <person name="Fryman J."/>
            <person name="Haakensen B."/>
            <person name="Lamar E."/>
            <person name="Latreille P."/>
            <person name="Leonard S."/>
            <person name="Meyer R."/>
            <person name="Mulvaney E."/>
            <person name="Ozersky P."/>
            <person name="Riley A."/>
            <person name="Strowmatt C."/>
            <person name="Wagner-McPherson C."/>
            <person name="Wollam A."/>
            <person name="Yoakum M."/>
            <person name="Bell M."/>
            <person name="Dedhia N."/>
            <person name="Parnell L."/>
            <person name="Shah R."/>
            <person name="Rodriguez M."/>
            <person name="Hoon See L."/>
            <person name="Vil D."/>
            <person name="Baker J."/>
            <person name="Kirchoff K."/>
            <person name="Toth K."/>
            <person name="King L."/>
            <person name="Bahret A."/>
            <person name="Miller B."/>
            <person name="Marra M.A."/>
            <person name="Martienssen R."/>
            <person name="McCombie W.R."/>
            <person name="Wilson R.K."/>
            <person name="Murphy G."/>
            <person name="Bancroft I."/>
            <person name="Volckaert G."/>
            <person name="Wambutt R."/>
            <person name="Duesterhoeft A."/>
            <person name="Stiekema W."/>
            <person name="Pohl T."/>
            <person name="Entian K.-D."/>
            <person name="Terryn N."/>
            <person name="Hartley N."/>
            <person name="Bent E."/>
            <person name="Johnson S."/>
            <person name="Langham S.-A."/>
            <person name="McCullagh B."/>
            <person name="Robben J."/>
            <person name="Grymonprez B."/>
            <person name="Zimmermann W."/>
            <person name="Ramsperger U."/>
            <person name="Wedler H."/>
            <person name="Balke K."/>
            <person name="Wedler E."/>
            <person name="Peters S."/>
            <person name="van Staveren M."/>
            <person name="Dirkse W."/>
            <person name="Mooijman P."/>
            <person name="Klein Lankhorst R."/>
            <person name="Weitzenegger T."/>
            <person name="Bothe G."/>
            <person name="Rose M."/>
            <person name="Hauf J."/>
            <person name="Berneiser S."/>
            <person name="Hempel S."/>
            <person name="Feldpausch M."/>
            <person name="Lamberth S."/>
            <person name="Villarroel R."/>
            <person name="Gielen J."/>
            <person name="Ardiles W."/>
            <person name="Bents O."/>
            <person name="Lemcke K."/>
            <person name="Kolesov G."/>
            <person name="Mayer K.F.X."/>
            <person name="Rudd S."/>
            <person name="Schoof H."/>
            <person name="Schueller C."/>
            <person name="Zaccaria P."/>
            <person name="Mewes H.-W."/>
            <person name="Bevan M."/>
            <person name="Fransz P.F."/>
        </authorList>
    </citation>
    <scope>NUCLEOTIDE SEQUENCE [LARGE SCALE GENOMIC DNA]</scope>
    <source>
        <strain>cv. Columbia</strain>
    </source>
</reference>
<reference key="3">
    <citation type="journal article" date="2017" name="Plant J.">
        <title>Araport11: a complete reannotation of the Arabidopsis thaliana reference genome.</title>
        <authorList>
            <person name="Cheng C.Y."/>
            <person name="Krishnakumar V."/>
            <person name="Chan A.P."/>
            <person name="Thibaud-Nissen F."/>
            <person name="Schobel S."/>
            <person name="Town C.D."/>
        </authorList>
    </citation>
    <scope>GENOME REANNOTATION</scope>
    <source>
        <strain>cv. Columbia</strain>
    </source>
</reference>
<reference key="4">
    <citation type="journal article" date="2003" name="Science">
        <title>Empirical analysis of transcriptional activity in the Arabidopsis genome.</title>
        <authorList>
            <person name="Yamada K."/>
            <person name="Lim J."/>
            <person name="Dale J.M."/>
            <person name="Chen H."/>
            <person name="Shinn P."/>
            <person name="Palm C.J."/>
            <person name="Southwick A.M."/>
            <person name="Wu H.C."/>
            <person name="Kim C.J."/>
            <person name="Nguyen M."/>
            <person name="Pham P.K."/>
            <person name="Cheuk R.F."/>
            <person name="Karlin-Newmann G."/>
            <person name="Liu S.X."/>
            <person name="Lam B."/>
            <person name="Sakano H."/>
            <person name="Wu T."/>
            <person name="Yu G."/>
            <person name="Miranda M."/>
            <person name="Quach H.L."/>
            <person name="Tripp M."/>
            <person name="Chang C.H."/>
            <person name="Lee J.M."/>
            <person name="Toriumi M.J."/>
            <person name="Chan M.M."/>
            <person name="Tang C.C."/>
            <person name="Onodera C.S."/>
            <person name="Deng J.M."/>
            <person name="Akiyama K."/>
            <person name="Ansari Y."/>
            <person name="Arakawa T."/>
            <person name="Banh J."/>
            <person name="Banno F."/>
            <person name="Bowser L."/>
            <person name="Brooks S.Y."/>
            <person name="Carninci P."/>
            <person name="Chao Q."/>
            <person name="Choy N."/>
            <person name="Enju A."/>
            <person name="Goldsmith A.D."/>
            <person name="Gurjal M."/>
            <person name="Hansen N.F."/>
            <person name="Hayashizaki Y."/>
            <person name="Johnson-Hopson C."/>
            <person name="Hsuan V.W."/>
            <person name="Iida K."/>
            <person name="Karnes M."/>
            <person name="Khan S."/>
            <person name="Koesema E."/>
            <person name="Ishida J."/>
            <person name="Jiang P.X."/>
            <person name="Jones T."/>
            <person name="Kawai J."/>
            <person name="Kamiya A."/>
            <person name="Meyers C."/>
            <person name="Nakajima M."/>
            <person name="Narusaka M."/>
            <person name="Seki M."/>
            <person name="Sakurai T."/>
            <person name="Satou M."/>
            <person name="Tamse R."/>
            <person name="Vaysberg M."/>
            <person name="Wallender E.K."/>
            <person name="Wong C."/>
            <person name="Yamamura Y."/>
            <person name="Yuan S."/>
            <person name="Shinozaki K."/>
            <person name="Davis R.W."/>
            <person name="Theologis A."/>
            <person name="Ecker J.R."/>
        </authorList>
    </citation>
    <scope>NUCLEOTIDE SEQUENCE [LARGE SCALE MRNA]</scope>
    <source>
        <strain>cv. Columbia</strain>
    </source>
</reference>
<reference key="5">
    <citation type="journal article" date="2006" name="BMC Evol. Biol.">
        <title>The monosaccharide transporter gene family in land plants is ancient and shows differential subfamily expression and expansion across lineages.</title>
        <authorList>
            <person name="Johnson D.A."/>
            <person name="Hill J.P."/>
            <person name="Thomas M.A."/>
        </authorList>
    </citation>
    <scope>GENE FAMILY</scope>
</reference>
<reference key="6">
    <citation type="journal article" date="2018" name="New Phytol.">
        <title>Transcription factor RD26 is a key regulator of metabolic reprogramming during dark-induced senescence.</title>
        <authorList>
            <person name="Kamranfar I."/>
            <person name="Xue G.-P."/>
            <person name="Tohge T."/>
            <person name="Sedaghatmehr M."/>
            <person name="Fernie A.R."/>
            <person name="Balazadeh S."/>
            <person name="Mueller-Roeber B."/>
        </authorList>
    </citation>
    <scope>INDUCTION BY NAC072/RD26</scope>
    <source>
        <strain>cv. Columbia</strain>
    </source>
</reference>
<evidence type="ECO:0000250" key="1"/>
<evidence type="ECO:0000255" key="2"/>
<evidence type="ECO:0000269" key="3">
    <source>
    </source>
</evidence>
<evidence type="ECO:0000269" key="4">
    <source>
    </source>
</evidence>
<evidence type="ECO:0000303" key="5">
    <source>
    </source>
</evidence>
<evidence type="ECO:0000303" key="6">
    <source>
    </source>
</evidence>
<evidence type="ECO:0000305" key="7"/>
<evidence type="ECO:0000312" key="8">
    <source>
        <dbReference type="Araport" id="AT5G27350"/>
    </source>
</evidence>
<evidence type="ECO:0000312" key="9">
    <source>
        <dbReference type="EMBL" id="AC007123"/>
    </source>
</evidence>
<feature type="chain" id="PRO_0000259867" description="Sugar transporter ERD6-like 17">
    <location>
        <begin position="1"/>
        <end position="474"/>
    </location>
</feature>
<feature type="transmembrane region" description="Helical; Name=1" evidence="2">
    <location>
        <begin position="27"/>
        <end position="47"/>
    </location>
</feature>
<feature type="transmembrane region" description="Helical; Name=2" evidence="2">
    <location>
        <begin position="76"/>
        <end position="96"/>
    </location>
</feature>
<feature type="transmembrane region" description="Helical; Name=3" evidence="2">
    <location>
        <begin position="106"/>
        <end position="126"/>
    </location>
</feature>
<feature type="transmembrane region" description="Helical; Name=4" evidence="2">
    <location>
        <begin position="129"/>
        <end position="149"/>
    </location>
</feature>
<feature type="transmembrane region" description="Helical; Name=5" evidence="2">
    <location>
        <begin position="159"/>
        <end position="180"/>
    </location>
</feature>
<feature type="transmembrane region" description="Helical; Name=6" evidence="2">
    <location>
        <begin position="184"/>
        <end position="204"/>
    </location>
</feature>
<feature type="transmembrane region" description="Helical; Name=7" evidence="2">
    <location>
        <begin position="266"/>
        <end position="286"/>
    </location>
</feature>
<feature type="transmembrane region" description="Helical; Name=8" evidence="2">
    <location>
        <begin position="302"/>
        <end position="322"/>
    </location>
</feature>
<feature type="transmembrane region" description="Helical; Name=9" evidence="2">
    <location>
        <begin position="329"/>
        <end position="349"/>
    </location>
</feature>
<feature type="transmembrane region" description="Helical; Name=10" evidence="2">
    <location>
        <begin position="363"/>
        <end position="383"/>
    </location>
</feature>
<feature type="transmembrane region" description="Helical; Name=11" evidence="2">
    <location>
        <begin position="403"/>
        <end position="423"/>
    </location>
</feature>
<feature type="transmembrane region" description="Helical; Name=12" evidence="2">
    <location>
        <begin position="429"/>
        <end position="449"/>
    </location>
</feature>
<feature type="sequence conflict" description="In Ref. 1; AAK11720." evidence="7" ref="1">
    <original>V</original>
    <variation>M</variation>
    <location>
        <position position="122"/>
    </location>
</feature>
<feature type="sequence conflict" description="In Ref. 1; AAK11720." evidence="7" ref="1">
    <original>T</original>
    <variation>N</variation>
    <location>
        <position position="181"/>
    </location>
</feature>
<keyword id="KW-0472">Membrane</keyword>
<keyword id="KW-1185">Reference proteome</keyword>
<keyword id="KW-0762">Sugar transport</keyword>
<keyword id="KW-0812">Transmembrane</keyword>
<keyword id="KW-1133">Transmembrane helix</keyword>
<keyword id="KW-0813">Transport</keyword>
<comment type="function">
    <text evidence="7">Sugar transporter.</text>
</comment>
<comment type="subcellular location">
    <subcellularLocation>
        <location evidence="1">Membrane</location>
        <topology evidence="1">Multi-pass membrane protein</topology>
    </subcellularLocation>
</comment>
<comment type="tissue specificity">
    <text evidence="3">Expressed in young seedlings.</text>
</comment>
<comment type="developmental stage">
    <text evidence="3">Expression increases during senescence with the highest levels in fully senescent leaves.</text>
</comment>
<comment type="induction">
    <text evidence="4">Triggered by NAC072/RD26 during senescence.</text>
</comment>
<comment type="similarity">
    <text evidence="7">Belongs to the major facilitator superfamily. Sugar transporter (TC 2.A.1.1) family.</text>
</comment>
<comment type="sequence caution" evidence="7">
    <conflict type="frameshift">
        <sequence resource="EMBL-CDS" id="AAK95268"/>
    </conflict>
</comment>
<accession>Q94CI7</accession>
<accession>Q94EJ0</accession>
<organism>
    <name type="scientific">Arabidopsis thaliana</name>
    <name type="common">Mouse-ear cress</name>
    <dbReference type="NCBI Taxonomy" id="3702"/>
    <lineage>
        <taxon>Eukaryota</taxon>
        <taxon>Viridiplantae</taxon>
        <taxon>Streptophyta</taxon>
        <taxon>Embryophyta</taxon>
        <taxon>Tracheophyta</taxon>
        <taxon>Spermatophyta</taxon>
        <taxon>Magnoliopsida</taxon>
        <taxon>eudicotyledons</taxon>
        <taxon>Gunneridae</taxon>
        <taxon>Pentapetalae</taxon>
        <taxon>rosids</taxon>
        <taxon>malvids</taxon>
        <taxon>Brassicales</taxon>
        <taxon>Brassicaceae</taxon>
        <taxon>Camelineae</taxon>
        <taxon>Arabidopsis</taxon>
    </lineage>
</organism>
<proteinExistence type="evidence at transcript level"/>
<gene>
    <name evidence="5" type="primary">SFP1</name>
    <name evidence="8" type="ordered locus">At5g27350</name>
    <name evidence="9" type="ORF">F21A20.60</name>
</gene>
<dbReference type="EMBL" id="AY026254">
    <property type="protein sequence ID" value="AAK11720.1"/>
    <property type="molecule type" value="mRNA"/>
</dbReference>
<dbReference type="EMBL" id="AC007123">
    <property type="status" value="NOT_ANNOTATED_CDS"/>
    <property type="molecule type" value="Genomic_DNA"/>
</dbReference>
<dbReference type="EMBL" id="CP002688">
    <property type="protein sequence ID" value="AED93675.1"/>
    <property type="molecule type" value="Genomic_DNA"/>
</dbReference>
<dbReference type="EMBL" id="AF410282">
    <property type="protein sequence ID" value="AAK95268.1"/>
    <property type="status" value="ALT_FRAME"/>
    <property type="molecule type" value="mRNA"/>
</dbReference>
<dbReference type="EMBL" id="AY143858">
    <property type="protein sequence ID" value="AAN28797.1"/>
    <property type="molecule type" value="mRNA"/>
</dbReference>
<dbReference type="RefSeq" id="NP_568493.1">
    <property type="nucleotide sequence ID" value="NM_122617.2"/>
</dbReference>
<dbReference type="SMR" id="Q94CI7"/>
<dbReference type="BioGRID" id="18068">
    <property type="interactions" value="29"/>
</dbReference>
<dbReference type="FunCoup" id="Q94CI7">
    <property type="interactions" value="678"/>
</dbReference>
<dbReference type="IntAct" id="Q94CI7">
    <property type="interactions" value="29"/>
</dbReference>
<dbReference type="STRING" id="3702.Q94CI7"/>
<dbReference type="PaxDb" id="3702-AT5G27350.1"/>
<dbReference type="ProteomicsDB" id="222062"/>
<dbReference type="EnsemblPlants" id="AT5G27350.1">
    <property type="protein sequence ID" value="AT5G27350.1"/>
    <property type="gene ID" value="AT5G27350"/>
</dbReference>
<dbReference type="GeneID" id="832794"/>
<dbReference type="Gramene" id="AT5G27350.1">
    <property type="protein sequence ID" value="AT5G27350.1"/>
    <property type="gene ID" value="AT5G27350"/>
</dbReference>
<dbReference type="KEGG" id="ath:AT5G27350"/>
<dbReference type="Araport" id="AT5G27350"/>
<dbReference type="TAIR" id="AT5G27350">
    <property type="gene designation" value="SFP1"/>
</dbReference>
<dbReference type="eggNOG" id="KOG0254">
    <property type="taxonomic scope" value="Eukaryota"/>
</dbReference>
<dbReference type="HOGENOM" id="CLU_001265_30_5_1"/>
<dbReference type="InParanoid" id="Q94CI7"/>
<dbReference type="OMA" id="GWCSITF"/>
<dbReference type="PhylomeDB" id="Q94CI7"/>
<dbReference type="PRO" id="PR:Q94CI7"/>
<dbReference type="Proteomes" id="UP000006548">
    <property type="component" value="Chromosome 5"/>
</dbReference>
<dbReference type="ExpressionAtlas" id="Q94CI7">
    <property type="expression patterns" value="baseline and differential"/>
</dbReference>
<dbReference type="GO" id="GO:0016020">
    <property type="term" value="C:membrane"/>
    <property type="evidence" value="ECO:0007669"/>
    <property type="project" value="UniProtKB-SubCell"/>
</dbReference>
<dbReference type="GO" id="GO:0051119">
    <property type="term" value="F:sugar transmembrane transporter activity"/>
    <property type="evidence" value="ECO:0007669"/>
    <property type="project" value="InterPro"/>
</dbReference>
<dbReference type="GO" id="GO:0009624">
    <property type="term" value="P:response to nematode"/>
    <property type="evidence" value="ECO:0007007"/>
    <property type="project" value="TAIR"/>
</dbReference>
<dbReference type="CDD" id="cd17358">
    <property type="entry name" value="MFS_GLUT6_8_Class3_like"/>
    <property type="match status" value="1"/>
</dbReference>
<dbReference type="FunFam" id="1.20.1250.20:FF:000043">
    <property type="entry name" value="sugar transporter ERD6-like 6"/>
    <property type="match status" value="1"/>
</dbReference>
<dbReference type="Gene3D" id="1.20.1250.20">
    <property type="entry name" value="MFS general substrate transporter like domains"/>
    <property type="match status" value="1"/>
</dbReference>
<dbReference type="InterPro" id="IPR020846">
    <property type="entry name" value="MFS_dom"/>
</dbReference>
<dbReference type="InterPro" id="IPR044775">
    <property type="entry name" value="MFS_ERD6/Tret1-like"/>
</dbReference>
<dbReference type="InterPro" id="IPR005828">
    <property type="entry name" value="MFS_sugar_transport-like"/>
</dbReference>
<dbReference type="InterPro" id="IPR036259">
    <property type="entry name" value="MFS_trans_sf"/>
</dbReference>
<dbReference type="InterPro" id="IPR050549">
    <property type="entry name" value="MFS_Trehalose_Transporter"/>
</dbReference>
<dbReference type="InterPro" id="IPR003663">
    <property type="entry name" value="Sugar/inositol_transpt"/>
</dbReference>
<dbReference type="InterPro" id="IPR005829">
    <property type="entry name" value="Sugar_transporter_CS"/>
</dbReference>
<dbReference type="NCBIfam" id="TIGR00879">
    <property type="entry name" value="SP"/>
    <property type="match status" value="1"/>
</dbReference>
<dbReference type="PANTHER" id="PTHR48021">
    <property type="match status" value="1"/>
</dbReference>
<dbReference type="PANTHER" id="PTHR48021:SF61">
    <property type="entry name" value="SUGAR TRANSPORTER ERD6-LIKE 17-RELATED"/>
    <property type="match status" value="1"/>
</dbReference>
<dbReference type="Pfam" id="PF00083">
    <property type="entry name" value="Sugar_tr"/>
    <property type="match status" value="1"/>
</dbReference>
<dbReference type="PRINTS" id="PR00171">
    <property type="entry name" value="SUGRTRNSPORT"/>
</dbReference>
<dbReference type="SUPFAM" id="SSF103473">
    <property type="entry name" value="MFS general substrate transporter"/>
    <property type="match status" value="1"/>
</dbReference>
<dbReference type="PROSITE" id="PS50850">
    <property type="entry name" value="MFS"/>
    <property type="match status" value="1"/>
</dbReference>
<dbReference type="PROSITE" id="PS00216">
    <property type="entry name" value="SUGAR_TRANSPORT_1"/>
    <property type="match status" value="1"/>
</dbReference>
<dbReference type="PROSITE" id="PS00217">
    <property type="entry name" value="SUGAR_TRANSPORT_2"/>
    <property type="match status" value="1"/>
</dbReference>
<sequence length="474" mass="51786">MVMEEGRSIEEGLLQLKNKNDDSECRITACVILSTFVAVCGSFSFGVATGYTSGAETGVMKDLDLSIAQFSAFGSFATLGAAIGALFCGNLAMVIGRRGTMWVSDFLCITGWLSIAFAKEVVLLNFGRIISGIGFGLTSYVVPVYIAEITPKHVRGTFTFSNQLLQNAGLAMIYFCGNFITWRTLALLGALPCFIQVIGLFFVPESPRWLAKVGSDKELENSLFRLRGRDADISREASEIQVMTKMVENDSKSSFSDLFQRKYRYTLVVGIGLMLIQQFSGSAAVISYASTIFRKAGFSVAIGTTMLGIFVIPKAMIGLILVDKWGRRPLLMTSAFGMSMTCMLLGVAFTLQKMQLLSELTPILSFICVMMYIATYAIGLGGLPWVIMSEIFPINIKVTAGSIVTLVSFSSSSIVTYAFNFLFEWSTQGTFFIFAGIGGAALLFIWLLVPETKGLSLEEIQVSLIHQPDERNQT</sequence>
<protein>
    <recommendedName>
        <fullName evidence="6">Sugar transporter ERD6-like 17</fullName>
    </recommendedName>
    <alternativeName>
        <fullName evidence="5">Sugar-porter family protein 1</fullName>
    </alternativeName>
</protein>
<name>EDL17_ARATH</name>